<comment type="function">
    <text evidence="5">Facilitates initiation of meiotic recombination and DNA double-strand break (DSB) formation at DSB hotspot sites by enhancing the interaction between rec10 and rec15.</text>
</comment>
<comment type="subunit">
    <text evidence="5">Interacts (via N-terminus) with rec10; the interaction is direct (PubMed:31665745). Interacts (via C-terminus) with rec15 (via C-terminus); the interaction is direct (PubMed:31665745).</text>
</comment>
<comment type="subcellular location">
    <subcellularLocation>
        <location evidence="3 4 5 6">Nucleus</location>
    </subcellularLocation>
    <subcellularLocation>
        <location evidence="3 4 5">Chromosome</location>
    </subcellularLocation>
    <text evidence="3 4 5">Predominantly localizes to linear elements (LinEs) on meiotic chromosomes, the S.pombe equivalents of synaptonemal complexes. A proportion also localizes to DNA double-strand break (DSB) hotspots.</text>
</comment>
<comment type="developmental stage">
    <text evidence="6">Present from pre-meiotic DNA replication and throughout meiosis I.</text>
</comment>
<comment type="disruption phenotype">
    <text evidence="5 6">Decreases DNA double-strand break formation during meiosis and meiotic gene conversion at ade6 (PubMed:31665745). Decreases localization of rec15 and rec10 to DNA double strand break (DSB) hotspots, and decreases localization of rec15 to chromosomal axis sites (PubMed:31665745). Abnormal sporulation (PubMed:33825974).</text>
</comment>
<accession>Q9P7P2</accession>
<sequence>MNSYKEEILQTKSDFTLKNLIFFAISTLCYKRALFNENCYKKVNFEIEHFKGADFDCQLKPTVVSLQAGVDKEADSFLEMMKTYIFSLVSMKVPFTVYLIISSQCKSILEDDAVEKEIFSFTINPGSEEKICCESFVSYQRSERFVIKLFLSGNVKTECKDEEKVVQIITKMERFQLSKGEATKAGVFLNTVETKDCMSWLNRGEFKDIVSFYESNNGIAISHCSHAFVPISTEKIMINKESSLFDSQEKIDSQLEKFLQPLKYDEIGSTQILDEQSVEKSLSQGKCEKMQNESRGLREIKNNNPCEEVKKSNWLKKNISGSDKVDKAEKKKALLNCECGDSTEDSEMFQCERCDGWVHCACYGFESDSDPRQPNQLLCYTCLLVDSESSLYDRMTMLVAYRRAIRCIWASEYQGFQKLAARLNCSYADAKRIEERLVNENIIYKEKKRKWIYFTNKSPEMVSYLREKYFTPSRWISHLNFQNYRQENQRVNMRSFLRPERMEVIERPKKVSKTSNTKETDTMKPLRI</sequence>
<organism>
    <name type="scientific">Schizosaccharomyces pombe (strain 972 / ATCC 24843)</name>
    <name type="common">Fission yeast</name>
    <dbReference type="NCBI Taxonomy" id="284812"/>
    <lineage>
        <taxon>Eukaryota</taxon>
        <taxon>Fungi</taxon>
        <taxon>Dikarya</taxon>
        <taxon>Ascomycota</taxon>
        <taxon>Taphrinomycotina</taxon>
        <taxon>Schizosaccharomycetes</taxon>
        <taxon>Schizosaccharomycetales</taxon>
        <taxon>Schizosaccharomycetaceae</taxon>
        <taxon>Schizosaccharomyces</taxon>
    </lineage>
</organism>
<dbReference type="EMBL" id="CU329671">
    <property type="protein sequence ID" value="CAB75992.1"/>
    <property type="molecule type" value="Genomic_DNA"/>
</dbReference>
<dbReference type="PIR" id="T50330">
    <property type="entry name" value="T50330"/>
</dbReference>
<dbReference type="RefSeq" id="NP_596448.1">
    <property type="nucleotide sequence ID" value="NM_001022367.1"/>
</dbReference>
<dbReference type="BioGRID" id="276602">
    <property type="interactions" value="47"/>
</dbReference>
<dbReference type="FunCoup" id="Q9P7P2">
    <property type="interactions" value="2"/>
</dbReference>
<dbReference type="STRING" id="284812.Q9P7P2"/>
<dbReference type="iPTMnet" id="Q9P7P2"/>
<dbReference type="PaxDb" id="4896-SPBC1718.02.1"/>
<dbReference type="EnsemblFungi" id="SPBC1718.02.1">
    <property type="protein sequence ID" value="SPBC1718.02.1:pep"/>
    <property type="gene ID" value="SPBC1718.02"/>
</dbReference>
<dbReference type="GeneID" id="2540064"/>
<dbReference type="KEGG" id="spo:2540064"/>
<dbReference type="PomBase" id="SPBC1718.02">
    <property type="gene designation" value="hop1"/>
</dbReference>
<dbReference type="VEuPathDB" id="FungiDB:SPBC1718.02"/>
<dbReference type="eggNOG" id="KOG1844">
    <property type="taxonomic scope" value="Eukaryota"/>
</dbReference>
<dbReference type="HOGENOM" id="CLU_517916_0_0_1"/>
<dbReference type="InParanoid" id="Q9P7P2"/>
<dbReference type="OMA" id="PSRWIAH"/>
<dbReference type="PRO" id="PR:Q9P7P2"/>
<dbReference type="Proteomes" id="UP000002485">
    <property type="component" value="Chromosome II"/>
</dbReference>
<dbReference type="GO" id="GO:0030998">
    <property type="term" value="C:linear element"/>
    <property type="evidence" value="ECO:0000314"/>
    <property type="project" value="PomBase"/>
</dbReference>
<dbReference type="GO" id="GO:0003677">
    <property type="term" value="F:DNA binding"/>
    <property type="evidence" value="ECO:0000250"/>
    <property type="project" value="PomBase"/>
</dbReference>
<dbReference type="GO" id="GO:0061659">
    <property type="term" value="F:ubiquitin-like protein ligase activity"/>
    <property type="evidence" value="ECO:0000255"/>
    <property type="project" value="PomBase"/>
</dbReference>
<dbReference type="GO" id="GO:0008270">
    <property type="term" value="F:zinc ion binding"/>
    <property type="evidence" value="ECO:0007669"/>
    <property type="project" value="UniProtKB-KW"/>
</dbReference>
<dbReference type="GO" id="GO:0010780">
    <property type="term" value="P:meiotic DNA double-strand break formation involved in reciprocal meiotic recombination"/>
    <property type="evidence" value="ECO:0000315"/>
    <property type="project" value="UniProtKB"/>
</dbReference>
<dbReference type="GO" id="GO:0007131">
    <property type="term" value="P:reciprocal meiotic recombination"/>
    <property type="evidence" value="ECO:0000315"/>
    <property type="project" value="PomBase"/>
</dbReference>
<dbReference type="Gene3D" id="3.30.900.10">
    <property type="entry name" value="HORMA domain"/>
    <property type="match status" value="1"/>
</dbReference>
<dbReference type="Gene3D" id="3.30.40.10">
    <property type="entry name" value="Zinc/RING finger domain, C3HC4 (zinc finger)"/>
    <property type="match status" value="1"/>
</dbReference>
<dbReference type="InterPro" id="IPR003511">
    <property type="entry name" value="HORMA_dom"/>
</dbReference>
<dbReference type="InterPro" id="IPR036570">
    <property type="entry name" value="HORMA_dom_sf"/>
</dbReference>
<dbReference type="InterPro" id="IPR019786">
    <property type="entry name" value="Zinc_finger_PHD-type_CS"/>
</dbReference>
<dbReference type="InterPro" id="IPR011011">
    <property type="entry name" value="Znf_FYVE_PHD"/>
</dbReference>
<dbReference type="InterPro" id="IPR019787">
    <property type="entry name" value="Znf_PHD-finger"/>
</dbReference>
<dbReference type="InterPro" id="IPR013083">
    <property type="entry name" value="Znf_RING/FYVE/PHD"/>
</dbReference>
<dbReference type="Pfam" id="PF02301">
    <property type="entry name" value="HORMA"/>
    <property type="match status" value="1"/>
</dbReference>
<dbReference type="Pfam" id="PF00628">
    <property type="entry name" value="PHD"/>
    <property type="match status" value="1"/>
</dbReference>
<dbReference type="SUPFAM" id="SSF57903">
    <property type="entry name" value="FYVE/PHD zinc finger"/>
    <property type="match status" value="1"/>
</dbReference>
<dbReference type="PROSITE" id="PS01359">
    <property type="entry name" value="ZF_PHD_1"/>
    <property type="match status" value="1"/>
</dbReference>
<protein>
    <recommendedName>
        <fullName evidence="7">Linear element-associated protein hop1</fullName>
    </recommendedName>
    <alternativeName>
        <fullName>Meiosis-specific protein hop1</fullName>
    </alternativeName>
</protein>
<proteinExistence type="evidence at protein level"/>
<reference key="1">
    <citation type="journal article" date="2002" name="Nature">
        <title>The genome sequence of Schizosaccharomyces pombe.</title>
        <authorList>
            <person name="Wood V."/>
            <person name="Gwilliam R."/>
            <person name="Rajandream M.A."/>
            <person name="Lyne M.H."/>
            <person name="Lyne R."/>
            <person name="Stewart A."/>
            <person name="Sgouros J.G."/>
            <person name="Peat N."/>
            <person name="Hayles J."/>
            <person name="Baker S.G."/>
            <person name="Basham D."/>
            <person name="Bowman S."/>
            <person name="Brooks K."/>
            <person name="Brown D."/>
            <person name="Brown S."/>
            <person name="Chillingworth T."/>
            <person name="Churcher C.M."/>
            <person name="Collins M."/>
            <person name="Connor R."/>
            <person name="Cronin A."/>
            <person name="Davis P."/>
            <person name="Feltwell T."/>
            <person name="Fraser A."/>
            <person name="Gentles S."/>
            <person name="Goble A."/>
            <person name="Hamlin N."/>
            <person name="Harris D.E."/>
            <person name="Hidalgo J."/>
            <person name="Hodgson G."/>
            <person name="Holroyd S."/>
            <person name="Hornsby T."/>
            <person name="Howarth S."/>
            <person name="Huckle E.J."/>
            <person name="Hunt S."/>
            <person name="Jagels K."/>
            <person name="James K.D."/>
            <person name="Jones L."/>
            <person name="Jones M."/>
            <person name="Leather S."/>
            <person name="McDonald S."/>
            <person name="McLean J."/>
            <person name="Mooney P."/>
            <person name="Moule S."/>
            <person name="Mungall K.L."/>
            <person name="Murphy L.D."/>
            <person name="Niblett D."/>
            <person name="Odell C."/>
            <person name="Oliver K."/>
            <person name="O'Neil S."/>
            <person name="Pearson D."/>
            <person name="Quail M.A."/>
            <person name="Rabbinowitsch E."/>
            <person name="Rutherford K.M."/>
            <person name="Rutter S."/>
            <person name="Saunders D."/>
            <person name="Seeger K."/>
            <person name="Sharp S."/>
            <person name="Skelton J."/>
            <person name="Simmonds M.N."/>
            <person name="Squares R."/>
            <person name="Squares S."/>
            <person name="Stevens K."/>
            <person name="Taylor K."/>
            <person name="Taylor R.G."/>
            <person name="Tivey A."/>
            <person name="Walsh S.V."/>
            <person name="Warren T."/>
            <person name="Whitehead S."/>
            <person name="Woodward J.R."/>
            <person name="Volckaert G."/>
            <person name="Aert R."/>
            <person name="Robben J."/>
            <person name="Grymonprez B."/>
            <person name="Weltjens I."/>
            <person name="Vanstreels E."/>
            <person name="Rieger M."/>
            <person name="Schaefer M."/>
            <person name="Mueller-Auer S."/>
            <person name="Gabel C."/>
            <person name="Fuchs M."/>
            <person name="Duesterhoeft A."/>
            <person name="Fritzc C."/>
            <person name="Holzer E."/>
            <person name="Moestl D."/>
            <person name="Hilbert H."/>
            <person name="Borzym K."/>
            <person name="Langer I."/>
            <person name="Beck A."/>
            <person name="Lehrach H."/>
            <person name="Reinhardt R."/>
            <person name="Pohl T.M."/>
            <person name="Eger P."/>
            <person name="Zimmermann W."/>
            <person name="Wedler H."/>
            <person name="Wambutt R."/>
            <person name="Purnelle B."/>
            <person name="Goffeau A."/>
            <person name="Cadieu E."/>
            <person name="Dreano S."/>
            <person name="Gloux S."/>
            <person name="Lelaure V."/>
            <person name="Mottier S."/>
            <person name="Galibert F."/>
            <person name="Aves S.J."/>
            <person name="Xiang Z."/>
            <person name="Hunt C."/>
            <person name="Moore K."/>
            <person name="Hurst S.M."/>
            <person name="Lucas M."/>
            <person name="Rochet M."/>
            <person name="Gaillardin C."/>
            <person name="Tallada V.A."/>
            <person name="Garzon A."/>
            <person name="Thode G."/>
            <person name="Daga R.R."/>
            <person name="Cruzado L."/>
            <person name="Jimenez J."/>
            <person name="Sanchez M."/>
            <person name="del Rey F."/>
            <person name="Benito J."/>
            <person name="Dominguez A."/>
            <person name="Revuelta J.L."/>
            <person name="Moreno S."/>
            <person name="Armstrong J."/>
            <person name="Forsburg S.L."/>
            <person name="Cerutti L."/>
            <person name="Lowe T."/>
            <person name="McCombie W.R."/>
            <person name="Paulsen I."/>
            <person name="Potashkin J."/>
            <person name="Shpakovski G.V."/>
            <person name="Ussery D."/>
            <person name="Barrell B.G."/>
            <person name="Nurse P."/>
        </authorList>
    </citation>
    <scope>NUCLEOTIDE SEQUENCE [LARGE SCALE GENOMIC DNA]</scope>
    <source>
        <strain>972 / ATCC 24843</strain>
    </source>
</reference>
<reference key="2">
    <citation type="journal article" date="2004" name="J. Cell Sci.">
        <title>S. pombe meiotic linear elements contain proteins related to synaptonemal complex components.</title>
        <authorList>
            <person name="Lorenz A."/>
            <person name="Wells J.L."/>
            <person name="Pryce D.W."/>
            <person name="Novatchkova M."/>
            <person name="Eisenhaber F."/>
            <person name="McFarlane R.J."/>
            <person name="Loidl J."/>
        </authorList>
    </citation>
    <scope>DOMAIN</scope>
    <scope>SUBCELLULAR LOCATION</scope>
</reference>
<reference key="3">
    <citation type="journal article" date="2006" name="Chromosoma">
        <title>Meiotic recombination proteins localize to linear elements in Schizosaccharomyces pombe.</title>
        <authorList>
            <person name="Lorenz A."/>
            <person name="Estreicher A."/>
            <person name="Kohli J."/>
            <person name="Loidl J."/>
        </authorList>
    </citation>
    <scope>SUBCELLULAR LOCATION</scope>
</reference>
<reference key="4">
    <citation type="journal article" date="2019" name="Nucleic Acids Res.">
        <title>Conserved HORMA domain-containing protein Hop1 stabilizes interaction between proteins of meiotic DNA break hotspots and chromosome axis.</title>
        <authorList>
            <person name="Kariyazono R."/>
            <person name="Oda A."/>
            <person name="Yamada T."/>
            <person name="Ohta K."/>
        </authorList>
    </citation>
    <scope>FUNCTION</scope>
    <scope>INTERACTION WITH REC10 AND REC15</scope>
    <scope>SUBCELLULAR LOCATION</scope>
    <scope>DISRUPTION PHENOTYPE</scope>
    <scope>MUTAGENESIS OF 344-GLU--ASP-370</scope>
</reference>
<reference key="5">
    <citation type="journal article" date="2021" name="Chromosoma">
        <title>Linear elements are stable structures along the chromosome axis in fission yeast meiosis.</title>
        <authorList>
            <person name="Ding D.Q."/>
            <person name="Matsuda A."/>
            <person name="Okamasa K."/>
            <person name="Hiraoka Y."/>
        </authorList>
    </citation>
    <scope>SUBCELLULAR LOCATION</scope>
    <scope>DEVELOPMENTAL STAGE</scope>
    <scope>DISRUPTION PHENOTYPE</scope>
</reference>
<feature type="chain" id="PRO_0000353843" description="Linear element-associated protein hop1">
    <location>
        <begin position="1"/>
        <end position="528"/>
    </location>
</feature>
<feature type="domain" description="HORMA">
    <location>
        <begin position="11"/>
        <end position="212"/>
    </location>
</feature>
<feature type="zinc finger region" description="PHD-type" evidence="1">
    <location>
        <begin position="334"/>
        <end position="385"/>
    </location>
</feature>
<feature type="region of interest" description="Disordered" evidence="2">
    <location>
        <begin position="507"/>
        <end position="528"/>
    </location>
</feature>
<feature type="compositionally biased region" description="Basic and acidic residues" evidence="2">
    <location>
        <begin position="516"/>
        <end position="528"/>
    </location>
</feature>
<feature type="binding site" evidence="1">
    <location>
        <position position="337"/>
    </location>
    <ligand>
        <name>Zn(2+)</name>
        <dbReference type="ChEBI" id="CHEBI:29105"/>
        <label>1</label>
    </ligand>
</feature>
<feature type="binding site" evidence="1">
    <location>
        <position position="339"/>
    </location>
    <ligand>
        <name>Zn(2+)</name>
        <dbReference type="ChEBI" id="CHEBI:29105"/>
        <label>1</label>
    </ligand>
</feature>
<feature type="binding site" evidence="1">
    <location>
        <position position="351"/>
    </location>
    <ligand>
        <name>Zn(2+)</name>
        <dbReference type="ChEBI" id="CHEBI:29105"/>
        <label>2</label>
    </ligand>
</feature>
<feature type="binding site" evidence="1">
    <location>
        <position position="354"/>
    </location>
    <ligand>
        <name>Zn(2+)</name>
        <dbReference type="ChEBI" id="CHEBI:29105"/>
        <label>2</label>
    </ligand>
</feature>
<feature type="binding site" evidence="1">
    <location>
        <position position="359"/>
    </location>
    <ligand>
        <name>Zn(2+)</name>
        <dbReference type="ChEBI" id="CHEBI:29105"/>
        <label>1</label>
    </ligand>
</feature>
<feature type="binding site" evidence="1">
    <location>
        <position position="362"/>
    </location>
    <ligand>
        <name>Zn(2+)</name>
        <dbReference type="ChEBI" id="CHEBI:29105"/>
        <label>1</label>
    </ligand>
</feature>
<feature type="binding site" evidence="1">
    <location>
        <position position="379"/>
    </location>
    <ligand>
        <name>Zn(2+)</name>
        <dbReference type="ChEBI" id="CHEBI:29105"/>
        <label>2</label>
    </ligand>
</feature>
<feature type="binding site" evidence="1">
    <location>
        <position position="382"/>
    </location>
    <ligand>
        <name>Zn(2+)</name>
        <dbReference type="ChEBI" id="CHEBI:29105"/>
        <label>2</label>
    </ligand>
</feature>
<feature type="mutagenesis site" description="Abolishes binding to rec15. Decreases DNA double-strand break formation during meiosis and meiotic gene conversion at ade6. Decreases localization of hop1, rec15 and rec10 to double-strand break (DSB) hotspots, and decreases localization of rec15 to chromosomal axis sites." evidence="5">
    <original>EDSEMFQCERCDGWVHCACYGFESDSD</original>
    <variation>AAAAMFQCERCDGWVHCACYGFAAAAA</variation>
    <location>
        <begin position="344"/>
        <end position="370"/>
    </location>
</feature>
<name>HOP1_SCHPO</name>
<evidence type="ECO:0000255" key="1">
    <source>
        <dbReference type="PROSITE-ProRule" id="PRU00146"/>
    </source>
</evidence>
<evidence type="ECO:0000256" key="2">
    <source>
        <dbReference type="SAM" id="MobiDB-lite"/>
    </source>
</evidence>
<evidence type="ECO:0000269" key="3">
    <source>
    </source>
</evidence>
<evidence type="ECO:0000269" key="4">
    <source>
    </source>
</evidence>
<evidence type="ECO:0000269" key="5">
    <source>
    </source>
</evidence>
<evidence type="ECO:0000269" key="6">
    <source>
    </source>
</evidence>
<evidence type="ECO:0000312" key="7">
    <source>
        <dbReference type="PomBase" id="SPBC1718.02"/>
    </source>
</evidence>
<keyword id="KW-0158">Chromosome</keyword>
<keyword id="KW-0238">DNA-binding</keyword>
<keyword id="KW-0469">Meiosis</keyword>
<keyword id="KW-0479">Metal-binding</keyword>
<keyword id="KW-0539">Nucleus</keyword>
<keyword id="KW-1185">Reference proteome</keyword>
<keyword id="KW-0862">Zinc</keyword>
<keyword id="KW-0863">Zinc-finger</keyword>
<gene>
    <name evidence="7" type="primary">hop1</name>
    <name evidence="7" type="ORF">SPBC1718.02</name>
</gene>